<evidence type="ECO:0000250" key="1">
    <source>
        <dbReference type="UniProtKB" id="B3A0M2"/>
    </source>
</evidence>
<evidence type="ECO:0000255" key="2"/>
<evidence type="ECO:0000269" key="3">
    <source>
    </source>
</evidence>
<evidence type="ECO:0000269" key="4">
    <source>
    </source>
</evidence>
<evidence type="ECO:0000269" key="5">
    <source>
    </source>
</evidence>
<evidence type="ECO:0000303" key="6">
    <source>
    </source>
</evidence>
<evidence type="ECO:0000303" key="7">
    <source>
    </source>
</evidence>
<evidence type="ECO:0000305" key="8">
    <source>
    </source>
</evidence>
<gene>
    <name evidence="6 7" type="primary">SLS3</name>
</gene>
<reference key="1">
    <citation type="journal article" date="2010" name="J. Biol. Chem.">
        <title>Cell-free synthesis and functional characterization of sphingolipid synthases from parasitic trypanosomatid protozoa.</title>
        <authorList>
            <person name="Sevova E.S."/>
            <person name="Goren M.A."/>
            <person name="Schwartz K.J."/>
            <person name="Hsu F.F."/>
            <person name="Turk J."/>
            <person name="Fox B.G."/>
            <person name="Bangs J.D."/>
        </authorList>
    </citation>
    <scope>NUCLEOTIDE SEQUENCE [GENOMIC DNA]</scope>
    <scope>FUNCTION</scope>
    <scope>CATALYTIC ACTIVITY</scope>
    <scope>MUTAGENESIS OF PHE-252</scope>
    <source>
        <strain evidence="4">427</strain>
    </source>
</reference>
<reference key="2">
    <citation type="journal article" date="2008" name="Mol. Microbiol.">
        <title>Developmentally regulated sphingolipid synthesis in African trypanosomes.</title>
        <authorList>
            <person name="Sutterwala S.S."/>
            <person name="Hsu F.F."/>
            <person name="Sevova E.S."/>
            <person name="Schwartz K.J."/>
            <person name="Zhang K."/>
            <person name="Key P."/>
            <person name="Turk J."/>
            <person name="Beverley S.M."/>
            <person name="Bangs J.D."/>
        </authorList>
    </citation>
    <scope>FUNCTION</scope>
    <scope>DEVELOPMENTAL STAGE</scope>
    <scope>DISRUPTION PHENOTYPE</scope>
    <source>
        <strain evidence="3">427</strain>
    </source>
</reference>
<reference key="3">
    <citation type="journal article" date="2011" name="Biochemistry">
        <title>Amino acid determinants of substrate selectivity in the Trypanosoma brucei sphingolipid synthase family.</title>
        <authorList>
            <person name="Goren M.A."/>
            <person name="Fox B.G."/>
            <person name="Bangs J.D."/>
        </authorList>
    </citation>
    <scope>FUNCTION</scope>
    <scope>CATALYTIC ACTIVITY</scope>
</reference>
<dbReference type="EC" id="2.7.8.-" evidence="4 5"/>
<dbReference type="EC" id="2.7.8.27" evidence="4 5"/>
<dbReference type="GO" id="GO:0005789">
    <property type="term" value="C:endoplasmic reticulum membrane"/>
    <property type="evidence" value="ECO:0007669"/>
    <property type="project" value="TreeGrafter"/>
</dbReference>
<dbReference type="GO" id="GO:0000139">
    <property type="term" value="C:Golgi membrane"/>
    <property type="evidence" value="ECO:0007669"/>
    <property type="project" value="TreeGrafter"/>
</dbReference>
<dbReference type="GO" id="GO:0005886">
    <property type="term" value="C:plasma membrane"/>
    <property type="evidence" value="ECO:0007669"/>
    <property type="project" value="TreeGrafter"/>
</dbReference>
<dbReference type="GO" id="GO:0047493">
    <property type="term" value="F:ceramide cholinephosphotransferase activity"/>
    <property type="evidence" value="ECO:0007669"/>
    <property type="project" value="TreeGrafter"/>
</dbReference>
<dbReference type="GO" id="GO:0016301">
    <property type="term" value="F:kinase activity"/>
    <property type="evidence" value="ECO:0007669"/>
    <property type="project" value="UniProtKB-KW"/>
</dbReference>
<dbReference type="GO" id="GO:0033188">
    <property type="term" value="F:sphingomyelin synthase activity"/>
    <property type="evidence" value="ECO:0007669"/>
    <property type="project" value="UniProtKB-EC"/>
</dbReference>
<dbReference type="GO" id="GO:0046513">
    <property type="term" value="P:ceramide biosynthetic process"/>
    <property type="evidence" value="ECO:0007669"/>
    <property type="project" value="TreeGrafter"/>
</dbReference>
<dbReference type="InterPro" id="IPR045221">
    <property type="entry name" value="Sphingomyelin_synth-like"/>
</dbReference>
<dbReference type="InterPro" id="IPR025749">
    <property type="entry name" value="Sphingomyelin_synth-like_dom"/>
</dbReference>
<dbReference type="PANTHER" id="PTHR21290:SF25">
    <property type="entry name" value="SPHINGOMYELIN SYNTHASE-RELATED PROTEIN 1"/>
    <property type="match status" value="1"/>
</dbReference>
<dbReference type="PANTHER" id="PTHR21290">
    <property type="entry name" value="SPHINGOMYELIN SYNTHETASE"/>
    <property type="match status" value="1"/>
</dbReference>
<dbReference type="Pfam" id="PF14360">
    <property type="entry name" value="PAP2_C"/>
    <property type="match status" value="1"/>
</dbReference>
<keyword id="KW-0418">Kinase</keyword>
<keyword id="KW-0443">Lipid metabolism</keyword>
<keyword id="KW-0472">Membrane</keyword>
<keyword id="KW-0746">Sphingolipid metabolism</keyword>
<keyword id="KW-0808">Transferase</keyword>
<keyword id="KW-0812">Transmembrane</keyword>
<keyword id="KW-1133">Transmembrane helix</keyword>
<accession>B3A0M1</accession>
<feature type="chain" id="PRO_0000413856" description="Phosphatidylcholine:ceramide cholinephosphotransferase 3">
    <location>
        <begin position="1"/>
        <end position="329"/>
    </location>
</feature>
<feature type="topological domain" description="Cytoplasmic" evidence="2">
    <location>
        <begin position="1"/>
        <end position="26"/>
    </location>
</feature>
<feature type="transmembrane region" description="Helical" evidence="2">
    <location>
        <begin position="27"/>
        <end position="47"/>
    </location>
</feature>
<feature type="topological domain" description="Extracellular" evidence="2">
    <location>
        <begin position="48"/>
        <end position="74"/>
    </location>
</feature>
<feature type="transmembrane region" description="Helical" evidence="2">
    <location>
        <begin position="75"/>
        <end position="95"/>
    </location>
</feature>
<feature type="topological domain" description="Cytoplasmic" evidence="2">
    <location>
        <begin position="96"/>
        <end position="147"/>
    </location>
</feature>
<feature type="transmembrane region" description="Helical" evidence="2">
    <location>
        <begin position="148"/>
        <end position="168"/>
    </location>
</feature>
<feature type="topological domain" description="Extracellular" evidence="2">
    <location>
        <begin position="169"/>
        <end position="211"/>
    </location>
</feature>
<feature type="transmembrane region" description="Helical" evidence="2">
    <location>
        <begin position="212"/>
        <end position="232"/>
    </location>
</feature>
<feature type="topological domain" description="Cytoplasmic" evidence="2">
    <location>
        <position position="233"/>
    </location>
</feature>
<feature type="transmembrane region" description="Helical" evidence="2">
    <location>
        <begin position="234"/>
        <end position="254"/>
    </location>
</feature>
<feature type="topological domain" description="Extracellular" evidence="2">
    <location>
        <begin position="255"/>
        <end position="257"/>
    </location>
</feature>
<feature type="transmembrane region" description="Helical" evidence="2">
    <location>
        <begin position="258"/>
        <end position="278"/>
    </location>
</feature>
<feature type="topological domain" description="Cytoplasmic" evidence="2">
    <location>
        <begin position="279"/>
        <end position="329"/>
    </location>
</feature>
<feature type="mutagenesis site" description="Enhanced inositol-phosphorylceramide (IPC) synthesis without affecting SM or EPC activity creating a trifunctional enzyme." evidence="4">
    <original>F</original>
    <variation>S</variation>
    <location>
        <position position="252"/>
    </location>
</feature>
<protein>
    <recommendedName>
        <fullName evidence="7">Phosphatidylcholine:ceramide cholinephosphotransferase 3</fullName>
        <shortName evidence="6 7">TbSLS3</shortName>
        <ecNumber evidence="4 5">2.7.8.-</ecNumber>
        <ecNumber evidence="4 5">2.7.8.27</ecNumber>
    </recommendedName>
    <alternativeName>
        <fullName evidence="7">Ethanolamine-phosphorylceramide synthase</fullName>
        <shortName evidence="7">EPC synthase</shortName>
    </alternativeName>
    <alternativeName>
        <fullName evidence="7">Sphingolipid synthase</fullName>
    </alternativeName>
    <alternativeName>
        <fullName evidence="7">Sphingomyelin synthase</fullName>
        <shortName evidence="7">SM synthase</shortName>
    </alternativeName>
</protein>
<name>SLS3_TRYBB</name>
<proteinExistence type="evidence at protein level"/>
<sequence length="329" mass="37084">MAVPPVEMYSGSFWNRMRKPLPLRTQVIRFTVVFVIVSFILAVALQITHERMPDPKVTKPLPDLGFELLTKVPGMYVLADCCIGFLNILSVFTAFKLYLLHRHCVGSGEPELPCNIPGVSRFFLSVWLCKENCRIELRNIHTIAWIRFITSYALLLLFRSAVIVMTSLPAPDDLCQNPPKIENPVKNVILTVLTAGAGSIHCGDLMYSGHTVILTLHLMFHWIYGAMVHWSFRPVVTVVAIFGYYCIVASRFHYTDDVLVAIYLTIATFIAVGHNADGAPWQLQLFIRWWPCCGANSREVTEDSQPVMVAFKSEAAGQSSRKVVDERNH</sequence>
<organism>
    <name type="scientific">Trypanosoma brucei brucei</name>
    <dbReference type="NCBI Taxonomy" id="5702"/>
    <lineage>
        <taxon>Eukaryota</taxon>
        <taxon>Discoba</taxon>
        <taxon>Euglenozoa</taxon>
        <taxon>Kinetoplastea</taxon>
        <taxon>Metakinetoplastina</taxon>
        <taxon>Trypanosomatida</taxon>
        <taxon>Trypanosomatidae</taxon>
        <taxon>Trypanosoma</taxon>
    </lineage>
</organism>
<comment type="function">
    <text evidence="1 4 5 6">Bifunctional sphingomyelin (SM)/ethanolamine phosphorylceramide (EPC) synthase with minimal inositol phosphorylceramide (IPC) synthase activity (PubMed:20457606, PubMed:21899277). Specificity is likely to be defined by residues in the lumenal catalytic domain that interact with the polar head groups of the phospholipid donors (PubMed:21899277). SM is synthesized by both stages of the parasite life cycle, bloodstream forms (BSF) and procyclic forms (PCF), by transferring the phosphocholine from a 1,2-diacyl-sn-glycero-3-phosphocholine to an N-acylsphing-4-enine (ceramide) or an N-acylsphinganine (dihydroceramide) (By similarity). Similarly, EPC is synthesized by transferring phosphoethanolamine from a 1,2-diacyl-sn-glycero-3-phosphoethanolamine to ceramide or dihydroceramide by BSF and PCF, while IPC is confined to PCF (By similarity). The ceramide/dihydroceramide ratios are skewed towards dihydroceramide in PCF parasites and ceramide in BSF parasites, this is likely due to differential expression and/or regulation of dihydroceramide desaturase, the enzyme responsible for converting dihydroceramide to ceramide (PubMed:18699867).</text>
</comment>
<comment type="catalytic activity">
    <reaction evidence="4 5">
        <text>an N-acylsphing-4-enine + a 1,2-diacyl-sn-glycero-3-phosphocholine = a sphingomyelin + a 1,2-diacyl-sn-glycerol</text>
        <dbReference type="Rhea" id="RHEA:18765"/>
        <dbReference type="ChEBI" id="CHEBI:17636"/>
        <dbReference type="ChEBI" id="CHEBI:17815"/>
        <dbReference type="ChEBI" id="CHEBI:52639"/>
        <dbReference type="ChEBI" id="CHEBI:57643"/>
        <dbReference type="EC" id="2.7.8.27"/>
    </reaction>
    <physiologicalReaction direction="left-to-right" evidence="4 5">
        <dbReference type="Rhea" id="RHEA:18766"/>
    </physiologicalReaction>
</comment>
<comment type="catalytic activity">
    <reaction evidence="8">
        <text>an N-acylsphinganine + a 1,2-diacyl-sn-glycero-3-phosphocholine = an N-acylsphinganine-1-phosphocholine + a 1,2-diacyl-sn-glycerol</text>
        <dbReference type="Rhea" id="RHEA:44620"/>
        <dbReference type="ChEBI" id="CHEBI:17815"/>
        <dbReference type="ChEBI" id="CHEBI:31488"/>
        <dbReference type="ChEBI" id="CHEBI:57643"/>
        <dbReference type="ChEBI" id="CHEBI:67090"/>
    </reaction>
    <physiologicalReaction direction="left-to-right" evidence="8">
        <dbReference type="Rhea" id="RHEA:44621"/>
    </physiologicalReaction>
</comment>
<comment type="catalytic activity">
    <reaction evidence="4 5">
        <text>an N-acylsphing-4-enine + a 1,2-diacyl-sn-glycero-3-phosphoethanolamine = an N-acylsphing-4-enine 1-phosphoethanolamine + a 1,2-diacyl-sn-glycerol</text>
        <dbReference type="Rhea" id="RHEA:36079"/>
        <dbReference type="ChEBI" id="CHEBI:17815"/>
        <dbReference type="ChEBI" id="CHEBI:52639"/>
        <dbReference type="ChEBI" id="CHEBI:64612"/>
        <dbReference type="ChEBI" id="CHEBI:73203"/>
    </reaction>
    <physiologicalReaction direction="left-to-right" evidence="4 5">
        <dbReference type="Rhea" id="RHEA:36080"/>
    </physiologicalReaction>
</comment>
<comment type="catalytic activity">
    <reaction evidence="8">
        <text>an N-acylsphinganine + a 1,2-diacyl-sn-glycero-3-phosphoethanolamine = an N-acylsphinganine-1-phosphoethanolamine + a 1,2-diacyl-sn-glycerol</text>
        <dbReference type="Rhea" id="RHEA:42136"/>
        <dbReference type="ChEBI" id="CHEBI:17815"/>
        <dbReference type="ChEBI" id="CHEBI:31488"/>
        <dbReference type="ChEBI" id="CHEBI:64612"/>
        <dbReference type="ChEBI" id="CHEBI:78655"/>
    </reaction>
    <physiologicalReaction direction="left-to-right" evidence="8">
        <dbReference type="Rhea" id="RHEA:42137"/>
    </physiologicalReaction>
</comment>
<comment type="subcellular location">
    <subcellularLocation>
        <location evidence="2">Membrane</location>
        <topology evidence="2">Multi-pass membrane protein</topology>
    </subcellularLocation>
</comment>
<comment type="developmental stage">
    <text evidence="3">Expressed in both bloodstream and procyclic stage parasites.</text>
</comment>
<comment type="disruption phenotype">
    <text evidence="3">Elevated ceramide levels and growth arrest; cells were arrested in division but replication of DNA and organelles continued giving rise to cells containing multiple nuclei, kinetoplasts and flagella.</text>
</comment>
<comment type="similarity">
    <text evidence="2">Belongs to the sphingomyelin synthase family.</text>
</comment>